<gene>
    <name type="primary">arp-6</name>
    <name type="ORF">NCU05587</name>
</gene>
<feature type="chain" id="PRO_0000089118" description="Actin-related protein 6">
    <location>
        <begin position="1"/>
        <end position="446"/>
    </location>
</feature>
<feature type="region of interest" description="Disordered" evidence="2">
    <location>
        <begin position="1"/>
        <end position="24"/>
    </location>
</feature>
<feature type="compositionally biased region" description="Basic residues" evidence="2">
    <location>
        <begin position="1"/>
        <end position="11"/>
    </location>
</feature>
<proteinExistence type="inferred from homology"/>
<keyword id="KW-0010">Activator</keyword>
<keyword id="KW-0156">Chromatin regulator</keyword>
<keyword id="KW-0963">Cytoplasm</keyword>
<keyword id="KW-0206">Cytoskeleton</keyword>
<keyword id="KW-0539">Nucleus</keyword>
<keyword id="KW-1185">Reference proteome</keyword>
<keyword id="KW-0804">Transcription</keyword>
<keyword id="KW-0805">Transcription regulation</keyword>
<dbReference type="EMBL" id="CM002241">
    <property type="protein sequence ID" value="ESA42173.1"/>
    <property type="molecule type" value="Genomic_DNA"/>
</dbReference>
<dbReference type="EMBL" id="CM002241">
    <property type="protein sequence ID" value="ESA42174.1"/>
    <property type="molecule type" value="Genomic_DNA"/>
</dbReference>
<dbReference type="RefSeq" id="XP_011394970.1">
    <property type="nucleotide sequence ID" value="XM_011396668.1"/>
</dbReference>
<dbReference type="RefSeq" id="XP_011394971.1">
    <property type="nucleotide sequence ID" value="XM_011396669.1"/>
</dbReference>
<dbReference type="SMR" id="Q7S6X6"/>
<dbReference type="FunCoup" id="Q7S6X6">
    <property type="interactions" value="285"/>
</dbReference>
<dbReference type="STRING" id="367110.Q7S6X6"/>
<dbReference type="PaxDb" id="5141-EFNCRP00000005656"/>
<dbReference type="EnsemblFungi" id="ESA42173">
    <property type="protein sequence ID" value="ESA42173"/>
    <property type="gene ID" value="NCU05587"/>
</dbReference>
<dbReference type="EnsemblFungi" id="ESA42174">
    <property type="protein sequence ID" value="ESA42174"/>
    <property type="gene ID" value="NCU05587"/>
</dbReference>
<dbReference type="GeneID" id="3876711"/>
<dbReference type="KEGG" id="ncr:NCU05587"/>
<dbReference type="VEuPathDB" id="FungiDB:NCU05587"/>
<dbReference type="HOGENOM" id="CLU_027965_1_1_1"/>
<dbReference type="InParanoid" id="Q7S6X6"/>
<dbReference type="OMA" id="FFEEYEC"/>
<dbReference type="OrthoDB" id="6220758at2759"/>
<dbReference type="Proteomes" id="UP000001805">
    <property type="component" value="Chromosome 5, Linkage Group VI"/>
</dbReference>
<dbReference type="GO" id="GO:0005737">
    <property type="term" value="C:cytoplasm"/>
    <property type="evidence" value="ECO:0007669"/>
    <property type="project" value="UniProtKB-SubCell"/>
</dbReference>
<dbReference type="GO" id="GO:0005856">
    <property type="term" value="C:cytoskeleton"/>
    <property type="evidence" value="ECO:0007669"/>
    <property type="project" value="UniProtKB-SubCell"/>
</dbReference>
<dbReference type="GO" id="GO:0000812">
    <property type="term" value="C:Swr1 complex"/>
    <property type="evidence" value="ECO:0000318"/>
    <property type="project" value="GO_Central"/>
</dbReference>
<dbReference type="GO" id="GO:0031491">
    <property type="term" value="F:nucleosome binding"/>
    <property type="evidence" value="ECO:0000318"/>
    <property type="project" value="GO_Central"/>
</dbReference>
<dbReference type="GO" id="GO:0006338">
    <property type="term" value="P:chromatin remodeling"/>
    <property type="evidence" value="ECO:0007669"/>
    <property type="project" value="EnsemblFungi"/>
</dbReference>
<dbReference type="CDD" id="cd10210">
    <property type="entry name" value="ASKHA_NBD_Arp6"/>
    <property type="match status" value="1"/>
</dbReference>
<dbReference type="FunFam" id="3.30.420.40:FF:000193">
    <property type="entry name" value="Actin-like protein ARP6"/>
    <property type="match status" value="1"/>
</dbReference>
<dbReference type="FunFam" id="3.90.640.10:FF:000040">
    <property type="entry name" value="Actin-like protein ARP6"/>
    <property type="match status" value="1"/>
</dbReference>
<dbReference type="Gene3D" id="3.30.420.40">
    <property type="match status" value="2"/>
</dbReference>
<dbReference type="Gene3D" id="3.90.640.10">
    <property type="entry name" value="Actin, Chain A, domain 4"/>
    <property type="match status" value="1"/>
</dbReference>
<dbReference type="InterPro" id="IPR004000">
    <property type="entry name" value="Actin"/>
</dbReference>
<dbReference type="InterPro" id="IPR043129">
    <property type="entry name" value="ATPase_NBD"/>
</dbReference>
<dbReference type="PANTHER" id="PTHR11937">
    <property type="entry name" value="ACTIN"/>
    <property type="match status" value="1"/>
</dbReference>
<dbReference type="Pfam" id="PF00022">
    <property type="entry name" value="Actin"/>
    <property type="match status" value="1"/>
</dbReference>
<dbReference type="SMART" id="SM00268">
    <property type="entry name" value="ACTIN"/>
    <property type="match status" value="1"/>
</dbReference>
<dbReference type="SUPFAM" id="SSF53067">
    <property type="entry name" value="Actin-like ATPase domain"/>
    <property type="match status" value="2"/>
</dbReference>
<comment type="function">
    <text evidence="1">Component of the SWR1 complex which mediates the ATP-dependent exchange of histone H2A for the H2A variant H2A.Z leading to transcriptional regulation of selected genes by chromatin remodeling. Involved in chromosome stability (By similarity).</text>
</comment>
<comment type="subunit">
    <text evidence="1">Component of the SWR1 chromatin remodeling complex.</text>
</comment>
<comment type="subcellular location">
    <subcellularLocation>
        <location evidence="1">Cytoplasm</location>
    </subcellularLocation>
    <subcellularLocation>
        <location evidence="1">Cytoplasm</location>
        <location evidence="1">Cytoskeleton</location>
    </subcellularLocation>
    <subcellularLocation>
        <location evidence="1">Nucleus</location>
    </subcellularLocation>
</comment>
<comment type="similarity">
    <text evidence="3">Belongs to the actin family. ARP6 subfamily.</text>
</comment>
<name>ARP6_NEUCR</name>
<reference key="1">
    <citation type="journal article" date="2003" name="Nature">
        <title>The genome sequence of the filamentous fungus Neurospora crassa.</title>
        <authorList>
            <person name="Galagan J.E."/>
            <person name="Calvo S.E."/>
            <person name="Borkovich K.A."/>
            <person name="Selker E.U."/>
            <person name="Read N.D."/>
            <person name="Jaffe D.B."/>
            <person name="FitzHugh W."/>
            <person name="Ma L.-J."/>
            <person name="Smirnov S."/>
            <person name="Purcell S."/>
            <person name="Rehman B."/>
            <person name="Elkins T."/>
            <person name="Engels R."/>
            <person name="Wang S."/>
            <person name="Nielsen C.B."/>
            <person name="Butler J."/>
            <person name="Endrizzi M."/>
            <person name="Qui D."/>
            <person name="Ianakiev P."/>
            <person name="Bell-Pedersen D."/>
            <person name="Nelson M.A."/>
            <person name="Werner-Washburne M."/>
            <person name="Selitrennikoff C.P."/>
            <person name="Kinsey J.A."/>
            <person name="Braun E.L."/>
            <person name="Zelter A."/>
            <person name="Schulte U."/>
            <person name="Kothe G.O."/>
            <person name="Jedd G."/>
            <person name="Mewes H.-W."/>
            <person name="Staben C."/>
            <person name="Marcotte E."/>
            <person name="Greenberg D."/>
            <person name="Roy A."/>
            <person name="Foley K."/>
            <person name="Naylor J."/>
            <person name="Stange-Thomann N."/>
            <person name="Barrett R."/>
            <person name="Gnerre S."/>
            <person name="Kamal M."/>
            <person name="Kamvysselis M."/>
            <person name="Mauceli E.W."/>
            <person name="Bielke C."/>
            <person name="Rudd S."/>
            <person name="Frishman D."/>
            <person name="Krystofova S."/>
            <person name="Rasmussen C."/>
            <person name="Metzenberg R.L."/>
            <person name="Perkins D.D."/>
            <person name="Kroken S."/>
            <person name="Cogoni C."/>
            <person name="Macino G."/>
            <person name="Catcheside D.E.A."/>
            <person name="Li W."/>
            <person name="Pratt R.J."/>
            <person name="Osmani S.A."/>
            <person name="DeSouza C.P.C."/>
            <person name="Glass N.L."/>
            <person name="Orbach M.J."/>
            <person name="Berglund J.A."/>
            <person name="Voelker R."/>
            <person name="Yarden O."/>
            <person name="Plamann M."/>
            <person name="Seiler S."/>
            <person name="Dunlap J.C."/>
            <person name="Radford A."/>
            <person name="Aramayo R."/>
            <person name="Natvig D.O."/>
            <person name="Alex L.A."/>
            <person name="Mannhaupt G."/>
            <person name="Ebbole D.J."/>
            <person name="Freitag M."/>
            <person name="Paulsen I."/>
            <person name="Sachs M.S."/>
            <person name="Lander E.S."/>
            <person name="Nusbaum C."/>
            <person name="Birren B.W."/>
        </authorList>
    </citation>
    <scope>NUCLEOTIDE SEQUENCE [LARGE SCALE GENOMIC DNA]</scope>
    <source>
        <strain>ATCC 24698 / 74-OR23-1A / CBS 708.71 / DSM 1257 / FGSC 987</strain>
    </source>
</reference>
<accession>Q7S6X6</accession>
<accession>V5IKN4</accession>
<evidence type="ECO:0000250" key="1"/>
<evidence type="ECO:0000256" key="2">
    <source>
        <dbReference type="SAM" id="MobiDB-lite"/>
    </source>
</evidence>
<evidence type="ECO:0000305" key="3"/>
<sequence>MTGRGGAKKSRAAGPAPPTTTLVLDNGADTIKAGFVSDDKSDGKPRIIPNCLARDRHRKIYVGSELEKCKDFSELAFRRPVEKGFIVNWEAQKEIWDREFFDDKAAQKCDPSDTRLILTEQPNSLPSLQTHCDQIVFEEYGFASYYRGLGPVFNAYRDIQSIFRTPQSTIDSPAQVILLIDSGYSHTTVTPILQGRPLHPAIRRLDVGGKLMTNYLTRLLSVRHFDMRNEPYIVNEMKEAVCYTSLDFKGDLEKTWKGTRGEKREDYLSGAGIAKDYVLPDSHTRFHGVVRDYEPGVSARARKGIVSTEDVLTLRNERFVVPELLFNPSDIGIRQPGIADLVKQSLLAVPIGLWPGLLANIVVVGGNSLSEGFCQRLQTEILKRFPDECRVRVARPEDPIISTWLGAANFAKHEHASKLEVTKQEYEEHGAAWVARKFAAGLGLDP</sequence>
<protein>
    <recommendedName>
        <fullName>Actin-related protein 6</fullName>
    </recommendedName>
</protein>
<organism>
    <name type="scientific">Neurospora crassa (strain ATCC 24698 / 74-OR23-1A / CBS 708.71 / DSM 1257 / FGSC 987)</name>
    <dbReference type="NCBI Taxonomy" id="367110"/>
    <lineage>
        <taxon>Eukaryota</taxon>
        <taxon>Fungi</taxon>
        <taxon>Dikarya</taxon>
        <taxon>Ascomycota</taxon>
        <taxon>Pezizomycotina</taxon>
        <taxon>Sordariomycetes</taxon>
        <taxon>Sordariomycetidae</taxon>
        <taxon>Sordariales</taxon>
        <taxon>Sordariaceae</taxon>
        <taxon>Neurospora</taxon>
    </lineage>
</organism>